<gene>
    <name type="primary">eno102</name>
    <name type="synonym">eno1</name>
    <name type="ORF">SPBPB21E7.01c</name>
    <name type="ORF">SPBPB8B6.07c</name>
</gene>
<evidence type="ECO:0000250" key="1"/>
<evidence type="ECO:0000250" key="2">
    <source>
        <dbReference type="UniProtKB" id="P00924"/>
    </source>
</evidence>
<evidence type="ECO:0000305" key="3"/>
<comment type="catalytic activity">
    <reaction evidence="2">
        <text>(2R)-2-phosphoglycerate = phosphoenolpyruvate + H2O</text>
        <dbReference type="Rhea" id="RHEA:10164"/>
        <dbReference type="ChEBI" id="CHEBI:15377"/>
        <dbReference type="ChEBI" id="CHEBI:58289"/>
        <dbReference type="ChEBI" id="CHEBI:58702"/>
        <dbReference type="EC" id="4.2.1.11"/>
    </reaction>
</comment>
<comment type="cofactor">
    <cofactor evidence="1">
        <name>Mg(2+)</name>
        <dbReference type="ChEBI" id="CHEBI:18420"/>
    </cofactor>
    <text evidence="1">Mg(2+) is required for catalysis and for stabilizing the dimer.</text>
</comment>
<comment type="pathway">
    <text>Carbohydrate degradation; glycolysis; pyruvate from D-glyceraldehyde 3-phosphate: step 4/5.</text>
</comment>
<comment type="subunit">
    <text evidence="2">Homodimer.</text>
</comment>
<comment type="subcellular location">
    <subcellularLocation>
        <location evidence="1">Cytoplasm</location>
    </subcellularLocation>
</comment>
<comment type="similarity">
    <text evidence="3">Belongs to the enolase family.</text>
</comment>
<reference evidence="3" key="1">
    <citation type="journal article" date="2002" name="Nature">
        <title>The genome sequence of Schizosaccharomyces pombe.</title>
        <authorList>
            <person name="Wood V."/>
            <person name="Gwilliam R."/>
            <person name="Rajandream M.A."/>
            <person name="Lyne M.H."/>
            <person name="Lyne R."/>
            <person name="Stewart A."/>
            <person name="Sgouros J.G."/>
            <person name="Peat N."/>
            <person name="Hayles J."/>
            <person name="Baker S.G."/>
            <person name="Basham D."/>
            <person name="Bowman S."/>
            <person name="Brooks K."/>
            <person name="Brown D."/>
            <person name="Brown S."/>
            <person name="Chillingworth T."/>
            <person name="Churcher C.M."/>
            <person name="Collins M."/>
            <person name="Connor R."/>
            <person name="Cronin A."/>
            <person name="Davis P."/>
            <person name="Feltwell T."/>
            <person name="Fraser A."/>
            <person name="Gentles S."/>
            <person name="Goble A."/>
            <person name="Hamlin N."/>
            <person name="Harris D.E."/>
            <person name="Hidalgo J."/>
            <person name="Hodgson G."/>
            <person name="Holroyd S."/>
            <person name="Hornsby T."/>
            <person name="Howarth S."/>
            <person name="Huckle E.J."/>
            <person name="Hunt S."/>
            <person name="Jagels K."/>
            <person name="James K.D."/>
            <person name="Jones L."/>
            <person name="Jones M."/>
            <person name="Leather S."/>
            <person name="McDonald S."/>
            <person name="McLean J."/>
            <person name="Mooney P."/>
            <person name="Moule S."/>
            <person name="Mungall K.L."/>
            <person name="Murphy L.D."/>
            <person name="Niblett D."/>
            <person name="Odell C."/>
            <person name="Oliver K."/>
            <person name="O'Neil S."/>
            <person name="Pearson D."/>
            <person name="Quail M.A."/>
            <person name="Rabbinowitsch E."/>
            <person name="Rutherford K.M."/>
            <person name="Rutter S."/>
            <person name="Saunders D."/>
            <person name="Seeger K."/>
            <person name="Sharp S."/>
            <person name="Skelton J."/>
            <person name="Simmonds M.N."/>
            <person name="Squares R."/>
            <person name="Squares S."/>
            <person name="Stevens K."/>
            <person name="Taylor K."/>
            <person name="Taylor R.G."/>
            <person name="Tivey A."/>
            <person name="Walsh S.V."/>
            <person name="Warren T."/>
            <person name="Whitehead S."/>
            <person name="Woodward J.R."/>
            <person name="Volckaert G."/>
            <person name="Aert R."/>
            <person name="Robben J."/>
            <person name="Grymonprez B."/>
            <person name="Weltjens I."/>
            <person name="Vanstreels E."/>
            <person name="Rieger M."/>
            <person name="Schaefer M."/>
            <person name="Mueller-Auer S."/>
            <person name="Gabel C."/>
            <person name="Fuchs M."/>
            <person name="Duesterhoeft A."/>
            <person name="Fritzc C."/>
            <person name="Holzer E."/>
            <person name="Moestl D."/>
            <person name="Hilbert H."/>
            <person name="Borzym K."/>
            <person name="Langer I."/>
            <person name="Beck A."/>
            <person name="Lehrach H."/>
            <person name="Reinhardt R."/>
            <person name="Pohl T.M."/>
            <person name="Eger P."/>
            <person name="Zimmermann W."/>
            <person name="Wedler H."/>
            <person name="Wambutt R."/>
            <person name="Purnelle B."/>
            <person name="Goffeau A."/>
            <person name="Cadieu E."/>
            <person name="Dreano S."/>
            <person name="Gloux S."/>
            <person name="Lelaure V."/>
            <person name="Mottier S."/>
            <person name="Galibert F."/>
            <person name="Aves S.J."/>
            <person name="Xiang Z."/>
            <person name="Hunt C."/>
            <person name="Moore K."/>
            <person name="Hurst S.M."/>
            <person name="Lucas M."/>
            <person name="Rochet M."/>
            <person name="Gaillardin C."/>
            <person name="Tallada V.A."/>
            <person name="Garzon A."/>
            <person name="Thode G."/>
            <person name="Daga R.R."/>
            <person name="Cruzado L."/>
            <person name="Jimenez J."/>
            <person name="Sanchez M."/>
            <person name="del Rey F."/>
            <person name="Benito J."/>
            <person name="Dominguez A."/>
            <person name="Revuelta J.L."/>
            <person name="Moreno S."/>
            <person name="Armstrong J."/>
            <person name="Forsburg S.L."/>
            <person name="Cerutti L."/>
            <person name="Lowe T."/>
            <person name="McCombie W.R."/>
            <person name="Paulsen I."/>
            <person name="Potashkin J."/>
            <person name="Shpakovski G.V."/>
            <person name="Ussery D."/>
            <person name="Barrell B.G."/>
            <person name="Nurse P."/>
        </authorList>
    </citation>
    <scope>NUCLEOTIDE SEQUENCE [LARGE SCALE GENOMIC DNA]</scope>
    <source>
        <strain>972 / ATCC 24843</strain>
    </source>
</reference>
<protein>
    <recommendedName>
        <fullName>Enolase 1-2</fullName>
        <ecNumber>4.2.1.11</ecNumber>
    </recommendedName>
    <alternativeName>
        <fullName>2-phospho-D-glycerate hydro-lyase 1-2</fullName>
    </alternativeName>
    <alternativeName>
        <fullName>2-phosphoglycerate dehydratase 1-2</fullName>
    </alternativeName>
</protein>
<name>ENO12_SCHPO</name>
<keyword id="KW-0963">Cytoplasm</keyword>
<keyword id="KW-0324">Glycolysis</keyword>
<keyword id="KW-0456">Lyase</keyword>
<keyword id="KW-0460">Magnesium</keyword>
<keyword id="KW-0479">Metal-binding</keyword>
<keyword id="KW-1185">Reference proteome</keyword>
<proteinExistence type="inferred from homology"/>
<accession>Q8NKC2</accession>
<accession>Q8TFF7</accession>
<feature type="chain" id="PRO_0000134059" description="Enolase 1-2">
    <location>
        <begin position="1"/>
        <end position="440"/>
    </location>
</feature>
<feature type="active site" description="Proton donor" evidence="1">
    <location>
        <position position="212"/>
    </location>
</feature>
<feature type="active site" description="Proton acceptor" evidence="1">
    <location>
        <position position="346"/>
    </location>
</feature>
<feature type="binding site" evidence="1">
    <location>
        <position position="160"/>
    </location>
    <ligand>
        <name>substrate</name>
    </ligand>
</feature>
<feature type="binding site" evidence="1">
    <location>
        <position position="169"/>
    </location>
    <ligand>
        <name>substrate</name>
    </ligand>
</feature>
<feature type="binding site" evidence="1">
    <location>
        <position position="247"/>
    </location>
    <ligand>
        <name>Mg(2+)</name>
        <dbReference type="ChEBI" id="CHEBI:18420"/>
    </ligand>
</feature>
<feature type="binding site" evidence="1">
    <location>
        <position position="296"/>
    </location>
    <ligand>
        <name>Mg(2+)</name>
        <dbReference type="ChEBI" id="CHEBI:18420"/>
    </ligand>
</feature>
<feature type="binding site" evidence="1">
    <location>
        <position position="296"/>
    </location>
    <ligand>
        <name>substrate</name>
    </ligand>
</feature>
<feature type="binding site" evidence="1">
    <location>
        <position position="321"/>
    </location>
    <ligand>
        <name>Mg(2+)</name>
        <dbReference type="ChEBI" id="CHEBI:18420"/>
    </ligand>
</feature>
<feature type="binding site" evidence="1">
    <location>
        <position position="321"/>
    </location>
    <ligand>
        <name>substrate</name>
    </ligand>
</feature>
<feature type="binding site" evidence="1">
    <location>
        <begin position="373"/>
        <end position="376"/>
    </location>
    <ligand>
        <name>substrate</name>
    </ligand>
</feature>
<feature type="binding site" evidence="1">
    <location>
        <position position="397"/>
    </location>
    <ligand>
        <name>substrate</name>
    </ligand>
</feature>
<organism>
    <name type="scientific">Schizosaccharomyces pombe (strain 972 / ATCC 24843)</name>
    <name type="common">Fission yeast</name>
    <dbReference type="NCBI Taxonomy" id="284812"/>
    <lineage>
        <taxon>Eukaryota</taxon>
        <taxon>Fungi</taxon>
        <taxon>Dikarya</taxon>
        <taxon>Ascomycota</taxon>
        <taxon>Taphrinomycotina</taxon>
        <taxon>Schizosaccharomycetes</taxon>
        <taxon>Schizosaccharomycetales</taxon>
        <taxon>Schizosaccharomycetaceae</taxon>
        <taxon>Schizosaccharomyces</taxon>
    </lineage>
</organism>
<dbReference type="EC" id="4.2.1.11"/>
<dbReference type="EMBL" id="CU329671">
    <property type="protein sequence ID" value="CAD27913.2"/>
    <property type="molecule type" value="Genomic_DNA"/>
</dbReference>
<dbReference type="RefSeq" id="NP_001018769.2">
    <property type="nucleotide sequence ID" value="NM_001020944.3"/>
</dbReference>
<dbReference type="SMR" id="Q8NKC2"/>
<dbReference type="FunCoup" id="Q8NKC2">
    <property type="interactions" value="278"/>
</dbReference>
<dbReference type="STRING" id="284812.Q8NKC2"/>
<dbReference type="PaxDb" id="4896-SPBPB21E7.01c.1"/>
<dbReference type="EnsemblFungi" id="SPBPB21E7.01c.1">
    <property type="protein sequence ID" value="SPBPB21E7.01c.1:pep"/>
    <property type="gene ID" value="SPBPB21E7.01c"/>
</dbReference>
<dbReference type="GeneID" id="3361181"/>
<dbReference type="KEGG" id="spo:3361181"/>
<dbReference type="PomBase" id="SPBPB21E7.01c">
    <property type="gene designation" value="eno102"/>
</dbReference>
<dbReference type="VEuPathDB" id="FungiDB:SPBPB21E7.01c"/>
<dbReference type="eggNOG" id="KOG2670">
    <property type="taxonomic scope" value="Eukaryota"/>
</dbReference>
<dbReference type="HOGENOM" id="CLU_031223_0_0_1"/>
<dbReference type="InParanoid" id="Q8NKC2"/>
<dbReference type="OMA" id="GMSITKI"/>
<dbReference type="PhylomeDB" id="Q8NKC2"/>
<dbReference type="Reactome" id="R-SPO-70171">
    <property type="pathway name" value="Glycolysis"/>
</dbReference>
<dbReference type="Reactome" id="R-SPO-70263">
    <property type="pathway name" value="Gluconeogenesis"/>
</dbReference>
<dbReference type="UniPathway" id="UPA00109">
    <property type="reaction ID" value="UER00187"/>
</dbReference>
<dbReference type="PRO" id="PR:Q8NKC2"/>
<dbReference type="Proteomes" id="UP000002485">
    <property type="component" value="Chromosome II"/>
</dbReference>
<dbReference type="GO" id="GO:0000015">
    <property type="term" value="C:phosphopyruvate hydratase complex"/>
    <property type="evidence" value="ECO:0000318"/>
    <property type="project" value="GO_Central"/>
</dbReference>
<dbReference type="GO" id="GO:0000287">
    <property type="term" value="F:magnesium ion binding"/>
    <property type="evidence" value="ECO:0007669"/>
    <property type="project" value="InterPro"/>
</dbReference>
<dbReference type="GO" id="GO:0004634">
    <property type="term" value="F:phosphopyruvate hydratase activity"/>
    <property type="evidence" value="ECO:0000318"/>
    <property type="project" value="GO_Central"/>
</dbReference>
<dbReference type="GO" id="GO:0061621">
    <property type="term" value="P:canonical glycolysis"/>
    <property type="evidence" value="ECO:0000255"/>
    <property type="project" value="PomBase"/>
</dbReference>
<dbReference type="GO" id="GO:0006096">
    <property type="term" value="P:glycolytic process"/>
    <property type="evidence" value="ECO:0000318"/>
    <property type="project" value="GO_Central"/>
</dbReference>
<dbReference type="CDD" id="cd03313">
    <property type="entry name" value="enolase"/>
    <property type="match status" value="1"/>
</dbReference>
<dbReference type="FunFam" id="3.30.390.10:FF:000001">
    <property type="entry name" value="Enolase"/>
    <property type="match status" value="1"/>
</dbReference>
<dbReference type="FunFam" id="3.20.20.120:FF:000002">
    <property type="entry name" value="Enolase 1"/>
    <property type="match status" value="1"/>
</dbReference>
<dbReference type="Gene3D" id="3.20.20.120">
    <property type="entry name" value="Enolase-like C-terminal domain"/>
    <property type="match status" value="1"/>
</dbReference>
<dbReference type="Gene3D" id="3.30.390.10">
    <property type="entry name" value="Enolase-like, N-terminal domain"/>
    <property type="match status" value="1"/>
</dbReference>
<dbReference type="HAMAP" id="MF_00318">
    <property type="entry name" value="Enolase"/>
    <property type="match status" value="1"/>
</dbReference>
<dbReference type="InterPro" id="IPR000941">
    <property type="entry name" value="Enolase"/>
</dbReference>
<dbReference type="InterPro" id="IPR036849">
    <property type="entry name" value="Enolase-like_C_sf"/>
</dbReference>
<dbReference type="InterPro" id="IPR029017">
    <property type="entry name" value="Enolase-like_N"/>
</dbReference>
<dbReference type="InterPro" id="IPR020810">
    <property type="entry name" value="Enolase_C"/>
</dbReference>
<dbReference type="InterPro" id="IPR020809">
    <property type="entry name" value="Enolase_CS"/>
</dbReference>
<dbReference type="InterPro" id="IPR020811">
    <property type="entry name" value="Enolase_N"/>
</dbReference>
<dbReference type="NCBIfam" id="TIGR01060">
    <property type="entry name" value="eno"/>
    <property type="match status" value="1"/>
</dbReference>
<dbReference type="PANTHER" id="PTHR11902">
    <property type="entry name" value="ENOLASE"/>
    <property type="match status" value="1"/>
</dbReference>
<dbReference type="PANTHER" id="PTHR11902:SF1">
    <property type="entry name" value="ENOLASE"/>
    <property type="match status" value="1"/>
</dbReference>
<dbReference type="Pfam" id="PF00113">
    <property type="entry name" value="Enolase_C"/>
    <property type="match status" value="1"/>
</dbReference>
<dbReference type="Pfam" id="PF03952">
    <property type="entry name" value="Enolase_N"/>
    <property type="match status" value="1"/>
</dbReference>
<dbReference type="PIRSF" id="PIRSF001400">
    <property type="entry name" value="Enolase"/>
    <property type="match status" value="1"/>
</dbReference>
<dbReference type="PRINTS" id="PR00148">
    <property type="entry name" value="ENOLASE"/>
</dbReference>
<dbReference type="SFLD" id="SFLDS00001">
    <property type="entry name" value="Enolase"/>
    <property type="match status" value="1"/>
</dbReference>
<dbReference type="SFLD" id="SFLDF00002">
    <property type="entry name" value="enolase"/>
    <property type="match status" value="1"/>
</dbReference>
<dbReference type="SMART" id="SM01192">
    <property type="entry name" value="Enolase_C"/>
    <property type="match status" value="1"/>
</dbReference>
<dbReference type="SMART" id="SM01193">
    <property type="entry name" value="Enolase_N"/>
    <property type="match status" value="1"/>
</dbReference>
<dbReference type="SUPFAM" id="SSF51604">
    <property type="entry name" value="Enolase C-terminal domain-like"/>
    <property type="match status" value="1"/>
</dbReference>
<dbReference type="SUPFAM" id="SSF54826">
    <property type="entry name" value="Enolase N-terminal domain-like"/>
    <property type="match status" value="1"/>
</dbReference>
<dbReference type="PROSITE" id="PS00164">
    <property type="entry name" value="ENOLASE"/>
    <property type="match status" value="1"/>
</dbReference>
<sequence>MTTIQKIYSRSIYDSRGNPTVEVELTTELGTFRSMVPSGASTGEWEAKELRDNDKNKWGGKGVTIAVHNVNNIIGPALVKSDIKITDQRGIDEFMIKLDGTNDKSKLGANSIVGVSMAVARAAAAFLKIPLYEYIGKLAGSKTTECIPVPSFNVLNGGRHAGGDLAFQEFMIMPIKAPTFSEGLRWGSEVYHTLKALAKKKYGASAGNVGDEGGIAPDLTTAEEALDLVNEAIKEAGYDGKVKIGFDVAASELYNGKLYDLDFKSEHPKPENKLDYKKLYEKYSALIEKYPIVFIEDPFSEEDWGAFSYMSSKTKVEVIADDLTVTNVKRLSKAIELKCANALLVKINQIGSLSETIDAANMAKKAGWGLMVSHRSGETDDSFIAHLAVGLEAGQMKSGAPCRSERLAKYNELLRIEDNLGDSAIYAGTRAADYIKSNTL</sequence>